<protein>
    <recommendedName>
        <fullName>Myelomonocytic growth factor</fullName>
        <shortName>MGF</shortName>
    </recommendedName>
</protein>
<organism>
    <name type="scientific">Gallus gallus</name>
    <name type="common">Chicken</name>
    <dbReference type="NCBI Taxonomy" id="9031"/>
    <lineage>
        <taxon>Eukaryota</taxon>
        <taxon>Metazoa</taxon>
        <taxon>Chordata</taxon>
        <taxon>Craniata</taxon>
        <taxon>Vertebrata</taxon>
        <taxon>Euteleostomi</taxon>
        <taxon>Archelosauria</taxon>
        <taxon>Archosauria</taxon>
        <taxon>Dinosauria</taxon>
        <taxon>Saurischia</taxon>
        <taxon>Theropoda</taxon>
        <taxon>Coelurosauria</taxon>
        <taxon>Aves</taxon>
        <taxon>Neognathae</taxon>
        <taxon>Galloanserae</taxon>
        <taxon>Galliformes</taxon>
        <taxon>Phasianidae</taxon>
        <taxon>Phasianinae</taxon>
        <taxon>Gallus</taxon>
    </lineage>
</organism>
<feature type="signal peptide">
    <location>
        <begin position="1"/>
        <end position="23"/>
    </location>
</feature>
<feature type="chain" id="PRO_0000015596" description="Myelomonocytic growth factor">
    <location>
        <begin position="24"/>
        <end position="201"/>
    </location>
</feature>
<feature type="glycosylation site" description="N-linked (GlcNAc...) asparagine" evidence="2">
    <location>
        <position position="123"/>
    </location>
</feature>
<feature type="glycosylation site" description="N-linked (GlcNAc...) asparagine" evidence="2">
    <location>
        <position position="137"/>
    </location>
</feature>
<feature type="disulfide bond" evidence="1">
    <location>
        <begin position="61"/>
        <end position="67"/>
    </location>
</feature>
<feature type="disulfide bond" evidence="1">
    <location>
        <begin position="89"/>
        <end position="99"/>
    </location>
</feature>
<proteinExistence type="evidence at transcript level"/>
<accession>P13854</accession>
<comment type="function">
    <text>Hematopoietic growth factor that stimulates the proliferation and colony formation of normal and transformed avian cells of the myeloid lineage.</text>
</comment>
<comment type="subcellular location">
    <subcellularLocation>
        <location>Secreted</location>
    </subcellularLocation>
</comment>
<comment type="similarity">
    <text evidence="3">Belongs to the IL-6 superfamily.</text>
</comment>
<name>MGF_CHICK</name>
<keyword id="KW-1015">Disulfide bond</keyword>
<keyword id="KW-0325">Glycoprotein</keyword>
<keyword id="KW-0339">Growth factor</keyword>
<keyword id="KW-1185">Reference proteome</keyword>
<keyword id="KW-0964">Secreted</keyword>
<keyword id="KW-0732">Signal</keyword>
<sequence>MCCLTPVLALALVLGAPWQALHGAPLAELSGDHDFQLFLHKNLEFTRKIRGDVAALQRAVCDTFQLCTEEELQLVQPDPHLVQAPLDQCHKRGFQAEVCFTQIRAGLHAYHDSLGAVLRLLPNHTTLVETLQLDAANLSSNIQQQMEDLGLDTVTLPAEQRSPPPTFSGPFQQQVGGFFILANFQRFLETAYRALRHLARL</sequence>
<reference key="1">
    <citation type="journal article" date="1989" name="EMBO J.">
        <title>Molecular cloning of the chicken myelomonocytic growth factor (cMGF) reveals relationship to interleukin 6 and granulocyte colony stimulating factor.</title>
        <authorList>
            <person name="Leutz A."/>
            <person name="Damm K."/>
            <person name="Sterneck E."/>
            <person name="Kowenz E."/>
            <person name="Ness S."/>
            <person name="Frank R."/>
            <person name="Gausepohl H."/>
            <person name="Pan Y.-C.E."/>
            <person name="Smart J."/>
            <person name="Hayman M."/>
            <person name="Graf T."/>
        </authorList>
    </citation>
    <scope>NUCLEOTIDE SEQUENCE [MRNA]</scope>
</reference>
<reference key="2">
    <citation type="journal article" date="1992" name="Mol. Cell. Biol.">
        <title>Structure of the chicken myelomonocytic growth factor gene and specific activation of its promoter in avian myelomonocytic cells by protein kinases.</title>
        <authorList>
            <person name="Sterneck E."/>
            <person name="Blattner C."/>
            <person name="Graf T."/>
            <person name="Leutz A."/>
        </authorList>
    </citation>
    <scope>NUCLEOTIDE SEQUENCE [GENOMIC DNA]</scope>
</reference>
<dbReference type="EMBL" id="M85034">
    <property type="protein sequence ID" value="AAA48694.1"/>
    <property type="molecule type" value="Genomic_DNA"/>
</dbReference>
<dbReference type="EMBL" id="X14477">
    <property type="protein sequence ID" value="CAA32639.1"/>
    <property type="molecule type" value="mRNA"/>
</dbReference>
<dbReference type="PIR" id="A42247">
    <property type="entry name" value="A42247"/>
</dbReference>
<dbReference type="RefSeq" id="NP_990610.1">
    <property type="nucleotide sequence ID" value="NM_205279.1"/>
</dbReference>
<dbReference type="SMR" id="P13854"/>
<dbReference type="STRING" id="9031.ENSGALP00000044330"/>
<dbReference type="GlyGen" id="P13854">
    <property type="glycosylation" value="2 sites"/>
</dbReference>
<dbReference type="PaxDb" id="9031-ENSGALP00000042841"/>
<dbReference type="GeneID" id="396216"/>
<dbReference type="KEGG" id="gga:396216"/>
<dbReference type="CTD" id="1440"/>
<dbReference type="VEuPathDB" id="HostDB:geneid_396216"/>
<dbReference type="eggNOG" id="ENOG502SCNA">
    <property type="taxonomic scope" value="Eukaryota"/>
</dbReference>
<dbReference type="HOGENOM" id="CLU_118367_0_0_1"/>
<dbReference type="InParanoid" id="P13854"/>
<dbReference type="OrthoDB" id="9896489at2759"/>
<dbReference type="PhylomeDB" id="P13854"/>
<dbReference type="Reactome" id="R-GGA-449836">
    <property type="pathway name" value="Other interleukin signaling"/>
</dbReference>
<dbReference type="Reactome" id="R-GGA-9674555">
    <property type="pathway name" value="Signaling by CSF3 (G-CSF)"/>
</dbReference>
<dbReference type="Reactome" id="R-GGA-9705462">
    <property type="pathway name" value="Inactivation of CSF3 (G-CSF) signaling"/>
</dbReference>
<dbReference type="PRO" id="PR:P13854"/>
<dbReference type="Proteomes" id="UP000000539">
    <property type="component" value="Chromosome 27"/>
</dbReference>
<dbReference type="Bgee" id="ENSGALG00000030907">
    <property type="expression patterns" value="Expressed in liver and 1 other cell type or tissue"/>
</dbReference>
<dbReference type="GO" id="GO:0005615">
    <property type="term" value="C:extracellular space"/>
    <property type="evidence" value="ECO:0000318"/>
    <property type="project" value="GO_Central"/>
</dbReference>
<dbReference type="GO" id="GO:0005125">
    <property type="term" value="F:cytokine activity"/>
    <property type="evidence" value="ECO:0000318"/>
    <property type="project" value="GO_Central"/>
</dbReference>
<dbReference type="GO" id="GO:0005130">
    <property type="term" value="F:granulocyte colony-stimulating factor receptor binding"/>
    <property type="evidence" value="ECO:0000318"/>
    <property type="project" value="GO_Central"/>
</dbReference>
<dbReference type="GO" id="GO:0008083">
    <property type="term" value="F:growth factor activity"/>
    <property type="evidence" value="ECO:0000318"/>
    <property type="project" value="GO_Central"/>
</dbReference>
<dbReference type="GO" id="GO:0006955">
    <property type="term" value="P:immune response"/>
    <property type="evidence" value="ECO:0007669"/>
    <property type="project" value="InterPro"/>
</dbReference>
<dbReference type="GO" id="GO:0008284">
    <property type="term" value="P:positive regulation of cell population proliferation"/>
    <property type="evidence" value="ECO:0000318"/>
    <property type="project" value="GO_Central"/>
</dbReference>
<dbReference type="GO" id="GO:0045639">
    <property type="term" value="P:positive regulation of myeloid cell differentiation"/>
    <property type="evidence" value="ECO:0000318"/>
    <property type="project" value="GO_Central"/>
</dbReference>
<dbReference type="Gene3D" id="1.20.1250.10">
    <property type="match status" value="1"/>
</dbReference>
<dbReference type="InterPro" id="IPR009079">
    <property type="entry name" value="4_helix_cytokine-like_core"/>
</dbReference>
<dbReference type="InterPro" id="IPR040117">
    <property type="entry name" value="GCSF/MGF"/>
</dbReference>
<dbReference type="InterPro" id="IPR030474">
    <property type="entry name" value="IL-6/GCSF/MGF"/>
</dbReference>
<dbReference type="InterPro" id="IPR030473">
    <property type="entry name" value="IL6/GCSF/MGF_CS"/>
</dbReference>
<dbReference type="PANTHER" id="PTHR10511">
    <property type="entry name" value="GRANULOCYTE COLONY-STIMULATING FACTOR"/>
    <property type="match status" value="1"/>
</dbReference>
<dbReference type="PANTHER" id="PTHR10511:SF2">
    <property type="entry name" value="GRANULOCYTE COLONY-STIMULATING FACTOR"/>
    <property type="match status" value="1"/>
</dbReference>
<dbReference type="Pfam" id="PF16647">
    <property type="entry name" value="GCSF"/>
    <property type="match status" value="1"/>
</dbReference>
<dbReference type="PIRSF" id="PIRSF001935">
    <property type="entry name" value="IL6_MGF_GCSF"/>
    <property type="match status" value="1"/>
</dbReference>
<dbReference type="PRINTS" id="PR00433">
    <property type="entry name" value="IL6GCSFMGF"/>
</dbReference>
<dbReference type="PRINTS" id="PR00434">
    <property type="entry name" value="INTERLEUKIN6"/>
</dbReference>
<dbReference type="SMART" id="SM00126">
    <property type="entry name" value="IL6"/>
    <property type="match status" value="1"/>
</dbReference>
<dbReference type="SUPFAM" id="SSF47266">
    <property type="entry name" value="4-helical cytokines"/>
    <property type="match status" value="1"/>
</dbReference>
<dbReference type="PROSITE" id="PS00254">
    <property type="entry name" value="INTERLEUKIN_6"/>
    <property type="match status" value="1"/>
</dbReference>
<evidence type="ECO:0000250" key="1"/>
<evidence type="ECO:0000255" key="2"/>
<evidence type="ECO:0000305" key="3"/>